<sequence length="336" mass="36989">MAELKLGYKASAEQFAPRELVELAVAAEAHGMDSATVSDHFQPWRHQGGHAPFSLSWMTAVGERTNRLLLGTSVLTPTFRYNPAVIAQAFATMGCLYPNRVFLGVGTGEALNEIATGYEGAWPEFKERFARLRESVGLMRQLWSGDRVDFDGDYYRLKGASIYDVPDGGVPVYIAAGGPAVAKYAGRAGDGFICTSGKGEELYTEKLMPAVREGAAAADRSVDGIDKMIEIKISYDPDPELALNNTRFWAPLSLTAEQKHSIDDPIEMEKAADALPIEQIAKRWIVASDPDEAVEKVGQYVTWGLNHLVFHAPGHDQRRFLELFQSDLAPRLRRLG</sequence>
<proteinExistence type="evidence at protein level"/>
<name>FGD_MYCTU</name>
<keyword id="KW-0002">3D-structure</keyword>
<keyword id="KW-0119">Carbohydrate metabolism</keyword>
<keyword id="KW-0560">Oxidoreductase</keyword>
<keyword id="KW-1185">Reference proteome</keyword>
<gene>
    <name type="primary">fgd1</name>
    <name type="synonym">fgd</name>
    <name type="ordered locus">Rv0407</name>
</gene>
<accession>P9WNE1</accession>
<accession>L0T6D5</accession>
<accession>P96253</accession>
<accession>Q7D9V4</accession>
<reference key="1">
    <citation type="journal article" date="1998" name="Nature">
        <title>Deciphering the biology of Mycobacterium tuberculosis from the complete genome sequence.</title>
        <authorList>
            <person name="Cole S.T."/>
            <person name="Brosch R."/>
            <person name="Parkhill J."/>
            <person name="Garnier T."/>
            <person name="Churcher C.M."/>
            <person name="Harris D.E."/>
            <person name="Gordon S.V."/>
            <person name="Eiglmeier K."/>
            <person name="Gas S."/>
            <person name="Barry C.E. III"/>
            <person name="Tekaia F."/>
            <person name="Badcock K."/>
            <person name="Basham D."/>
            <person name="Brown D."/>
            <person name="Chillingworth T."/>
            <person name="Connor R."/>
            <person name="Davies R.M."/>
            <person name="Devlin K."/>
            <person name="Feltwell T."/>
            <person name="Gentles S."/>
            <person name="Hamlin N."/>
            <person name="Holroyd S."/>
            <person name="Hornsby T."/>
            <person name="Jagels K."/>
            <person name="Krogh A."/>
            <person name="McLean J."/>
            <person name="Moule S."/>
            <person name="Murphy L.D."/>
            <person name="Oliver S."/>
            <person name="Osborne J."/>
            <person name="Quail M.A."/>
            <person name="Rajandream M.A."/>
            <person name="Rogers J."/>
            <person name="Rutter S."/>
            <person name="Seeger K."/>
            <person name="Skelton S."/>
            <person name="Squares S."/>
            <person name="Squares R."/>
            <person name="Sulston J.E."/>
            <person name="Taylor K."/>
            <person name="Whitehead S."/>
            <person name="Barrell B.G."/>
        </authorList>
    </citation>
    <scope>NUCLEOTIDE SEQUENCE [LARGE SCALE GENOMIC DNA]</scope>
    <source>
        <strain>ATCC 25618 / H37Rv</strain>
    </source>
</reference>
<reference key="2">
    <citation type="journal article" date="2000" name="Nature">
        <title>A small-molecule nitroimidazopyran drug candidate for the treatment of tuberculosis.</title>
        <authorList>
            <person name="Stover C.K."/>
            <person name="Warrener P."/>
            <person name="VanDevanter D.R."/>
            <person name="Sherman D.R."/>
            <person name="Arain T.M."/>
            <person name="Langhorne M.H."/>
            <person name="Anderson S.W."/>
            <person name="Towell J.A."/>
            <person name="Yuan Y."/>
            <person name="McMurray D.N."/>
            <person name="Kreiswirth B.N."/>
            <person name="Barry C.E."/>
            <person name="Baker W.R."/>
        </authorList>
    </citation>
    <scope>FUNCTION IN THE ACTIVATION OF PA-824</scope>
    <source>
        <strain>ATCC 27294 / TMC 102 / H37Rv</strain>
    </source>
</reference>
<reference key="3">
    <citation type="journal article" date="2006" name="Proc. Natl. Acad. Sci. U.S.A.">
        <title>Identification of a nitroimidazo-oxazine-specific protein involved in PA-824 resistance in Mycobacterium tuberculosis.</title>
        <authorList>
            <person name="Manjunatha U.H."/>
            <person name="Boshoff H."/>
            <person name="Dowd C.S."/>
            <person name="Zhang L."/>
            <person name="Albert T.J."/>
            <person name="Norton J.E."/>
            <person name="Daniels L."/>
            <person name="Dick T."/>
            <person name="Pang S.S."/>
            <person name="Barry C.E. III"/>
        </authorList>
    </citation>
    <scope>DISRUPTION PHENOTYPE</scope>
</reference>
<reference key="4">
    <citation type="journal article" date="2007" name="Protein Expr. Purif.">
        <title>Expression, purification and crystallization of native and selenomethionine labeled Mycobacterium tuberculosis FGD1 (Rv0407) using a Mycobacterium smegmatis expression system.</title>
        <authorList>
            <person name="Bashiri G."/>
            <person name="Squire C.J."/>
            <person name="Baker E.N."/>
            <person name="Moreland N.J."/>
        </authorList>
    </citation>
    <scope>SUBUNIT</scope>
    <scope>CRYSTALLIZATION</scope>
    <source>
        <strain>ATCC 25618 / H37Rv</strain>
    </source>
</reference>
<reference key="5">
    <citation type="journal article" date="2011" name="Mol. Cell. Proteomics">
        <title>Proteogenomic analysis of Mycobacterium tuberculosis by high resolution mass spectrometry.</title>
        <authorList>
            <person name="Kelkar D.S."/>
            <person name="Kumar D."/>
            <person name="Kumar P."/>
            <person name="Balakrishnan L."/>
            <person name="Muthusamy B."/>
            <person name="Yadav A.K."/>
            <person name="Shrivastava P."/>
            <person name="Marimuthu A."/>
            <person name="Anand S."/>
            <person name="Sundaram H."/>
            <person name="Kingsbury R."/>
            <person name="Harsha H.C."/>
            <person name="Nair B."/>
            <person name="Prasad T.S."/>
            <person name="Chauhan D.S."/>
            <person name="Katoch K."/>
            <person name="Katoch V.M."/>
            <person name="Kumar P."/>
            <person name="Chaerkady R."/>
            <person name="Ramachandran S."/>
            <person name="Dash D."/>
            <person name="Pandey A."/>
        </authorList>
    </citation>
    <scope>IDENTIFICATION BY MASS SPECTROMETRY [LARGE SCALE ANALYSIS]</scope>
    <source>
        <strain>ATCC 25618 / H37Rv</strain>
    </source>
</reference>
<reference key="6">
    <citation type="journal article" date="2013" name="Mol. Microbiol.">
        <title>A novel F(420)-dependent anti-oxidant mechanism protects Mycobacterium tuberculosis against oxidative stress and bactericidal agents.</title>
        <authorList>
            <person name="Gurumurthy M."/>
            <person name="Rao M."/>
            <person name="Mukherjee T."/>
            <person name="Rao S.P."/>
            <person name="Boshoff H.I."/>
            <person name="Dick T."/>
            <person name="Barry C.E. III"/>
            <person name="Manjunatha U.H."/>
        </authorList>
    </citation>
    <scope>ROLE IN RESISTANCE TO OXIDATIVE STRESS</scope>
    <source>
        <strain>ATCC 27294 / TMC 102 / H37Rv</strain>
    </source>
</reference>
<reference key="7">
    <citation type="journal article" date="2008" name="J. Biol. Chem.">
        <title>Crystal structures of F420-dependent glucose-6-phosphate dehydrogenase FGD1 involved in the activation of the anti-tuberculosis drug candidate PA-824 reveal the basis of coenzyme and substrate binding.</title>
        <authorList>
            <person name="Bashiri G."/>
            <person name="Squire C.J."/>
            <person name="Moreland N.J."/>
            <person name="Baker E.N."/>
        </authorList>
    </citation>
    <scope>X-RAY CRYSTALLOGRAPHY (1.90 ANGSTROMS) OF APOENZYME AND COMPLEX WITH SUBSTRATE ANALOG AND COENZYME F420</scope>
    <scope>FUNCTION</scope>
    <scope>CATALYTIC ACTIVITY</scope>
    <scope>ACTIVITY REGULATION</scope>
    <scope>BIOPHYSICOCHEMICAL PROPERTIES</scope>
    <scope>REACTION MECHANISM</scope>
    <scope>SUBUNIT</scope>
    <scope>ACTIVE SITE</scope>
    <source>
        <strain>ATCC 25618 / H37Rv</strain>
    </source>
</reference>
<evidence type="ECO:0000255" key="1">
    <source>
        <dbReference type="HAMAP-Rule" id="MF_02123"/>
    </source>
</evidence>
<evidence type="ECO:0000269" key="2">
    <source>
    </source>
</evidence>
<evidence type="ECO:0000269" key="3">
    <source>
    </source>
</evidence>
<evidence type="ECO:0000269" key="4">
    <source>
    </source>
</evidence>
<evidence type="ECO:0000269" key="5">
    <source>
    </source>
</evidence>
<evidence type="ECO:0000303" key="6">
    <source>
    </source>
</evidence>
<evidence type="ECO:0000305" key="7"/>
<evidence type="ECO:0000305" key="8">
    <source>
    </source>
</evidence>
<evidence type="ECO:0000305" key="9">
    <source>
    </source>
</evidence>
<evidence type="ECO:0007744" key="10">
    <source>
        <dbReference type="PDB" id="3B4Y"/>
    </source>
</evidence>
<evidence type="ECO:0007829" key="11">
    <source>
        <dbReference type="PDB" id="3C8N"/>
    </source>
</evidence>
<comment type="function">
    <text evidence="1 5 9">Catalyzes the coenzyme F420-dependent oxidation of glucose 6-phosphate to 6-phosphogluconolactone (PubMed:18434308). Appears to have a role in resistance to oxidative stress, via its consumption of G6P that serves as a source of reducing power to combat oxidative stress in mycobacteria. More precisely, is likely involved in a F420-dependent anti-oxidant mechanism that protects M.tuberculosis against oxidative stress and bactericidal agents (PubMed:23240649).</text>
</comment>
<comment type="function">
    <text evidence="2">Is essential for the bioreductive activation of the bicyclic 4-nitroimidazole prodrug PA-824 (a nitroimidazo-oxazine) developed for anti-tuberculosis therapy against both replicating and persistent bacteria. It does not interact directly with PA-824 but, rather, provides reduced F420 to the deazaflavin-dependent nitroreductase Ddn, which in turn activates PA-824.</text>
</comment>
<comment type="catalytic activity">
    <reaction evidence="5">
        <text>oxidized coenzyme F420-(gamma-L-Glu)(n) + D-glucose 6-phosphate + H(+) = 6-phospho-D-glucono-1,5-lactone + reduced coenzyme F420-(gamma-L-Glu)(n)</text>
        <dbReference type="Rhea" id="RHEA:27294"/>
        <dbReference type="Rhea" id="RHEA-COMP:12939"/>
        <dbReference type="Rhea" id="RHEA-COMP:14378"/>
        <dbReference type="ChEBI" id="CHEBI:15378"/>
        <dbReference type="ChEBI" id="CHEBI:57955"/>
        <dbReference type="ChEBI" id="CHEBI:61548"/>
        <dbReference type="ChEBI" id="CHEBI:133980"/>
        <dbReference type="ChEBI" id="CHEBI:139511"/>
        <dbReference type="EC" id="1.1.98.2"/>
    </reaction>
</comment>
<comment type="activity regulation">
    <text evidence="5">Inhibited by citrate.</text>
</comment>
<comment type="biophysicochemical properties">
    <kinetics>
        <KM evidence="5">100 uM for glucose 6-phosphate</KM>
    </kinetics>
    <phDependence>
        <text evidence="5">Optimum pH is 6.5-7.</text>
    </phDependence>
</comment>
<comment type="subunit">
    <text evidence="4 5">Homodimer.</text>
</comment>
<comment type="disruption phenotype">
    <text evidence="3">Cells lacking this gene display a strong resistance to PA-824 and CGI-17341 (a nitroimidazo-oxazole).</text>
</comment>
<comment type="similarity">
    <text evidence="7">Belongs to the F420-dependent glucose-6-phosphate dehydrogenase family.</text>
</comment>
<feature type="chain" id="PRO_0000399504" description="F420-dependent glucose-6-phosphate dehydrogenase">
    <location>
        <begin position="1"/>
        <end position="336"/>
    </location>
</feature>
<feature type="active site" description="Proton donor" evidence="8">
    <location>
        <position position="40"/>
    </location>
</feature>
<feature type="active site" description="Proton acceptor" evidence="8">
    <location>
        <position position="109"/>
    </location>
</feature>
<feature type="binding site" evidence="8 10">
    <location>
        <position position="39"/>
    </location>
    <ligand>
        <name>coenzyme F420-(gamma-Glu)n</name>
        <dbReference type="ChEBI" id="CHEBI:133980"/>
    </ligand>
</feature>
<feature type="binding site" evidence="8">
    <location>
        <position position="76"/>
    </location>
    <ligand>
        <name>coenzyme F420-(gamma-Glu)n</name>
        <dbReference type="ChEBI" id="CHEBI:133980"/>
    </ligand>
</feature>
<feature type="binding site" evidence="8 10">
    <location>
        <begin position="107"/>
        <end position="108"/>
    </location>
    <ligand>
        <name>coenzyme F420-(gamma-Glu)n</name>
        <dbReference type="ChEBI" id="CHEBI:133980"/>
    </ligand>
</feature>
<feature type="binding site" evidence="8 10">
    <location>
        <position position="112"/>
    </location>
    <ligand>
        <name>coenzyme F420-(gamma-Glu)n</name>
        <dbReference type="ChEBI" id="CHEBI:133980"/>
    </ligand>
</feature>
<feature type="binding site" evidence="8 10">
    <location>
        <begin position="177"/>
        <end position="178"/>
    </location>
    <ligand>
        <name>coenzyme F420-(gamma-Glu)n</name>
        <dbReference type="ChEBI" id="CHEBI:133980"/>
    </ligand>
</feature>
<feature type="binding site" evidence="8">
    <location>
        <begin position="180"/>
        <end position="181"/>
    </location>
    <ligand>
        <name>coenzyme F420-(gamma-Glu)n</name>
        <dbReference type="ChEBI" id="CHEBI:133980"/>
    </ligand>
</feature>
<feature type="binding site" evidence="8">
    <location>
        <position position="195"/>
    </location>
    <ligand>
        <name>substrate</name>
    </ligand>
</feature>
<feature type="binding site" evidence="8">
    <location>
        <position position="198"/>
    </location>
    <ligand>
        <name>substrate</name>
    </ligand>
</feature>
<feature type="binding site" evidence="8">
    <location>
        <position position="259"/>
    </location>
    <ligand>
        <name>substrate</name>
    </ligand>
</feature>
<feature type="binding site" evidence="8">
    <location>
        <position position="283"/>
    </location>
    <ligand>
        <name>substrate</name>
    </ligand>
</feature>
<feature type="strand" evidence="11">
    <location>
        <begin position="5"/>
        <end position="10"/>
    </location>
</feature>
<feature type="turn" evidence="11">
    <location>
        <begin position="12"/>
        <end position="14"/>
    </location>
</feature>
<feature type="helix" evidence="11">
    <location>
        <begin position="17"/>
        <end position="29"/>
    </location>
</feature>
<feature type="strand" evidence="11">
    <location>
        <begin position="33"/>
        <end position="37"/>
    </location>
</feature>
<feature type="helix" evidence="11">
    <location>
        <begin position="54"/>
        <end position="64"/>
    </location>
</feature>
<feature type="strand" evidence="11">
    <location>
        <begin position="69"/>
        <end position="73"/>
    </location>
</feature>
<feature type="turn" evidence="11">
    <location>
        <begin position="77"/>
        <end position="80"/>
    </location>
</feature>
<feature type="helix" evidence="11">
    <location>
        <begin position="83"/>
        <end position="96"/>
    </location>
</feature>
<feature type="strand" evidence="11">
    <location>
        <begin position="101"/>
        <end position="105"/>
    </location>
</feature>
<feature type="helix" evidence="11">
    <location>
        <begin position="110"/>
        <end position="113"/>
    </location>
</feature>
<feature type="turn" evidence="11">
    <location>
        <begin position="114"/>
        <end position="117"/>
    </location>
</feature>
<feature type="helix" evidence="11">
    <location>
        <begin position="125"/>
        <end position="142"/>
    </location>
</feature>
<feature type="strand" evidence="11">
    <location>
        <begin position="148"/>
        <end position="151"/>
    </location>
</feature>
<feature type="strand" evidence="11">
    <location>
        <begin position="156"/>
        <end position="160"/>
    </location>
</feature>
<feature type="strand" evidence="11">
    <location>
        <begin position="172"/>
        <end position="175"/>
    </location>
</feature>
<feature type="helix" evidence="11">
    <location>
        <begin position="179"/>
        <end position="188"/>
    </location>
</feature>
<feature type="strand" evidence="11">
    <location>
        <begin position="190"/>
        <end position="195"/>
    </location>
</feature>
<feature type="helix" evidence="11">
    <location>
        <begin position="200"/>
        <end position="205"/>
    </location>
</feature>
<feature type="helix" evidence="11">
    <location>
        <begin position="207"/>
        <end position="217"/>
    </location>
</feature>
<feature type="helix" evidence="11">
    <location>
        <begin position="222"/>
        <end position="224"/>
    </location>
</feature>
<feature type="strand" evidence="11">
    <location>
        <begin position="225"/>
        <end position="235"/>
    </location>
</feature>
<feature type="helix" evidence="11">
    <location>
        <begin position="239"/>
        <end position="244"/>
    </location>
</feature>
<feature type="helix" evidence="11">
    <location>
        <begin position="245"/>
        <end position="253"/>
    </location>
</feature>
<feature type="helix" evidence="11">
    <location>
        <begin position="256"/>
        <end position="261"/>
    </location>
</feature>
<feature type="helix" evidence="11">
    <location>
        <begin position="265"/>
        <end position="273"/>
    </location>
</feature>
<feature type="helix" evidence="11">
    <location>
        <begin position="277"/>
        <end position="281"/>
    </location>
</feature>
<feature type="strand" evidence="11">
    <location>
        <begin position="284"/>
        <end position="289"/>
    </location>
</feature>
<feature type="helix" evidence="11">
    <location>
        <begin position="290"/>
        <end position="302"/>
    </location>
</feature>
<feature type="strand" evidence="11">
    <location>
        <begin position="307"/>
        <end position="311"/>
    </location>
</feature>
<feature type="helix" evidence="11">
    <location>
        <begin position="317"/>
        <end position="327"/>
    </location>
</feature>
<feature type="helix" evidence="11">
    <location>
        <begin position="329"/>
        <end position="333"/>
    </location>
</feature>
<organism>
    <name type="scientific">Mycobacterium tuberculosis (strain ATCC 25618 / H37Rv)</name>
    <dbReference type="NCBI Taxonomy" id="83332"/>
    <lineage>
        <taxon>Bacteria</taxon>
        <taxon>Bacillati</taxon>
        <taxon>Actinomycetota</taxon>
        <taxon>Actinomycetes</taxon>
        <taxon>Mycobacteriales</taxon>
        <taxon>Mycobacteriaceae</taxon>
        <taxon>Mycobacterium</taxon>
        <taxon>Mycobacterium tuberculosis complex</taxon>
    </lineage>
</organism>
<dbReference type="EC" id="1.1.98.2" evidence="5"/>
<dbReference type="EMBL" id="AL123456">
    <property type="protein sequence ID" value="CCP43138.1"/>
    <property type="molecule type" value="Genomic_DNA"/>
</dbReference>
<dbReference type="PIR" id="E70628">
    <property type="entry name" value="E70628"/>
</dbReference>
<dbReference type="RefSeq" id="NP_214921.1">
    <property type="nucleotide sequence ID" value="NC_000962.3"/>
</dbReference>
<dbReference type="RefSeq" id="WP_003898438.1">
    <property type="nucleotide sequence ID" value="NZ_NVQJ01000002.1"/>
</dbReference>
<dbReference type="PDB" id="3B4Y">
    <property type="method" value="X-ray"/>
    <property type="resolution" value="1.95 A"/>
    <property type="chains" value="A/B=1-336"/>
</dbReference>
<dbReference type="PDB" id="3C8N">
    <property type="method" value="X-ray"/>
    <property type="resolution" value="1.90 A"/>
    <property type="chains" value="A/B/C/D=1-336"/>
</dbReference>
<dbReference type="PDBsum" id="3B4Y"/>
<dbReference type="PDBsum" id="3C8N"/>
<dbReference type="SMR" id="P9WNE1"/>
<dbReference type="STRING" id="83332.Rv0407"/>
<dbReference type="PaxDb" id="83332-Rv0407"/>
<dbReference type="DNASU" id="886418"/>
<dbReference type="GeneID" id="886418"/>
<dbReference type="KEGG" id="mtu:Rv0407"/>
<dbReference type="KEGG" id="mtv:RVBD_0407"/>
<dbReference type="TubercuList" id="Rv0407"/>
<dbReference type="eggNOG" id="COG2141">
    <property type="taxonomic scope" value="Bacteria"/>
</dbReference>
<dbReference type="InParanoid" id="P9WNE1"/>
<dbReference type="OrthoDB" id="180193at2"/>
<dbReference type="PhylomeDB" id="P9WNE1"/>
<dbReference type="BioCyc" id="MetaCyc:G185E-4532-MONOMER"/>
<dbReference type="BRENDA" id="1.1.98.2">
    <property type="organism ID" value="3445"/>
</dbReference>
<dbReference type="Reactome" id="R-HSA-1222541">
    <property type="pathway name" value="Cell redox homeostasis"/>
</dbReference>
<dbReference type="EvolutionaryTrace" id="P9WNE1"/>
<dbReference type="Proteomes" id="UP000001584">
    <property type="component" value="Chromosome"/>
</dbReference>
<dbReference type="GO" id="GO:0005829">
    <property type="term" value="C:cytosol"/>
    <property type="evidence" value="ECO:0000304"/>
    <property type="project" value="Reactome"/>
</dbReference>
<dbReference type="GO" id="GO:0009274">
    <property type="term" value="C:peptidoglycan-based cell wall"/>
    <property type="evidence" value="ECO:0007005"/>
    <property type="project" value="UniProtKB"/>
</dbReference>
<dbReference type="GO" id="GO:0005886">
    <property type="term" value="C:plasma membrane"/>
    <property type="evidence" value="ECO:0007005"/>
    <property type="project" value="MTBBASE"/>
</dbReference>
<dbReference type="GO" id="GO:0070967">
    <property type="term" value="F:coenzyme F420 binding"/>
    <property type="evidence" value="ECO:0000314"/>
    <property type="project" value="MTBBASE"/>
</dbReference>
<dbReference type="GO" id="GO:0052749">
    <property type="term" value="F:glucose-6-phosphate dehydrogenase (coenzyme F420) activity"/>
    <property type="evidence" value="ECO:0007669"/>
    <property type="project" value="UniProtKB-EC"/>
</dbReference>
<dbReference type="GO" id="GO:0016614">
    <property type="term" value="F:oxidoreductase activity, acting on CH-OH group of donors"/>
    <property type="evidence" value="ECO:0000314"/>
    <property type="project" value="MTBBASE"/>
</dbReference>
<dbReference type="GO" id="GO:0016705">
    <property type="term" value="F:oxidoreductase activity, acting on paired donors, with incorporation or reduction of molecular oxygen"/>
    <property type="evidence" value="ECO:0007669"/>
    <property type="project" value="InterPro"/>
</dbReference>
<dbReference type="GO" id="GO:0005975">
    <property type="term" value="P:carbohydrate metabolic process"/>
    <property type="evidence" value="ECO:0007669"/>
    <property type="project" value="UniProtKB-UniRule"/>
</dbReference>
<dbReference type="GO" id="GO:0045454">
    <property type="term" value="P:cell redox homeostasis"/>
    <property type="evidence" value="ECO:0000304"/>
    <property type="project" value="Reactome"/>
</dbReference>
<dbReference type="CDD" id="cd01097">
    <property type="entry name" value="Tetrahydromethanopterin_reductase"/>
    <property type="match status" value="1"/>
</dbReference>
<dbReference type="FunFam" id="3.20.20.30:FF:000004">
    <property type="entry name" value="F420-dependent glucose-6-phosphate dehydrogenase"/>
    <property type="match status" value="1"/>
</dbReference>
<dbReference type="Gene3D" id="3.20.20.30">
    <property type="entry name" value="Luciferase-like domain"/>
    <property type="match status" value="1"/>
</dbReference>
<dbReference type="HAMAP" id="MF_02123">
    <property type="entry name" value="F420_G6P_DH"/>
    <property type="match status" value="1"/>
</dbReference>
<dbReference type="InterPro" id="IPR019944">
    <property type="entry name" value="F420-dep_G6P_DH"/>
</dbReference>
<dbReference type="InterPro" id="IPR050564">
    <property type="entry name" value="F420-G6PD/mer"/>
</dbReference>
<dbReference type="InterPro" id="IPR019945">
    <property type="entry name" value="F420_G6P_DH-rel"/>
</dbReference>
<dbReference type="InterPro" id="IPR011251">
    <property type="entry name" value="Luciferase-like_dom"/>
</dbReference>
<dbReference type="InterPro" id="IPR036661">
    <property type="entry name" value="Luciferase-like_sf"/>
</dbReference>
<dbReference type="NCBIfam" id="TIGR03554">
    <property type="entry name" value="F420_G6P_DH"/>
    <property type="match status" value="1"/>
</dbReference>
<dbReference type="NCBIfam" id="TIGR03557">
    <property type="entry name" value="F420_G6P_family"/>
    <property type="match status" value="1"/>
</dbReference>
<dbReference type="PANTHER" id="PTHR43244">
    <property type="match status" value="1"/>
</dbReference>
<dbReference type="PANTHER" id="PTHR43244:SF1">
    <property type="entry name" value="5,10-METHYLENETETRAHYDROMETHANOPTERIN REDUCTASE"/>
    <property type="match status" value="1"/>
</dbReference>
<dbReference type="Pfam" id="PF00296">
    <property type="entry name" value="Bac_luciferase"/>
    <property type="match status" value="1"/>
</dbReference>
<dbReference type="SUPFAM" id="SSF51679">
    <property type="entry name" value="Bacterial luciferase-like"/>
    <property type="match status" value="1"/>
</dbReference>
<protein>
    <recommendedName>
        <fullName evidence="6">F420-dependent glucose-6-phosphate dehydrogenase</fullName>
        <shortName>FGD</shortName>
        <shortName evidence="6">FGD1</shortName>
        <shortName>G6PD</shortName>
        <ecNumber evidence="5">1.1.98.2</ecNumber>
    </recommendedName>
</protein>